<protein>
    <recommendedName>
        <fullName>Polycomb group RING finger protein 2</fullName>
    </recommendedName>
    <alternativeName>
        <fullName>DNA-binding protein Mel-18</fullName>
    </alternativeName>
    <alternativeName>
        <fullName>Melanoma nuclear protein 18</fullName>
    </alternativeName>
    <alternativeName>
        <fullName>RING finger protein 110</fullName>
    </alternativeName>
    <alternativeName>
        <fullName>Zinc finger protein 144</fullName>
        <shortName>Zfp-144</shortName>
    </alternativeName>
</protein>
<comment type="function">
    <text evidence="1 5 7 8 11 12 13">Transcriptional repressor (PubMed:8521824). Binds specifically to the DNA sequence 5'-GACTNGACT-3' (PubMed:8521824). Has tumor suppressor activity (PubMed:8521824). May play a role in control of cell proliferation and/or neural cell development (Probable). Regulates proliferation of early T progenitor cells by maintaining expression of HES1 (PubMed:15728456). Also plays a role in antero-posterior specification of the axial skeleton and negative regulation of the self-renewal activity of hematopoietic stem cells (PubMed:15183898, PubMed:8625838). Component of a Polycomb group (PcG) multiprotein PRC1-like complex, a complex class required to maintain the transcriptionally repressive state of many genes, including Hox genes, throughout development. PcG PRC1 complex acts via chromatin remodeling and modification of histones; it mediates monoubiquitination of histone H2A 'Lys-119', rendering chromatin heritably changed in its expressibility. Within the PRC1-like complex, regulates RNF2 ubiquitin ligase activity (By similarity).</text>
</comment>
<comment type="subunit">
    <text evidence="1 6 9">Exists as both a monomer and homodimer (PubMed:12480532). Component of a PRC1-like complex. Interacts with CBX8, RING1 and RNF2 (By similarity). Interacts with CBX7 (PubMed:22226355). Interacts with PHC2 (PubMed:16024804).</text>
</comment>
<comment type="interaction">
    <interactant intactId="EBI-926857">
        <id>P23798</id>
    </interactant>
    <interactant intactId="EBI-3043887">
        <id>Q60848</id>
        <label>Hells</label>
    </interactant>
    <organismsDiffer>false</organismsDiffer>
    <experiments>2</experiments>
</comment>
<comment type="interaction">
    <interactant intactId="EBI-926857">
        <id>P23798</id>
    </interactant>
    <interactant intactId="EBI-927346">
        <id>Q64028</id>
        <label>Phc1</label>
    </interactant>
    <organismsDiffer>false</organismsDiffer>
    <experiments>4</experiments>
</comment>
<comment type="interaction">
    <interactant intactId="EBI-926857">
        <id>P23798</id>
    </interactant>
    <interactant intactId="EBI-642357">
        <id>Q9QWH1</id>
        <label>Phc2</label>
    </interactant>
    <organismsDiffer>false</organismsDiffer>
    <experiments>5</experiments>
</comment>
<comment type="interaction">
    <interactant intactId="EBI-926857">
        <id>P23798</id>
    </interactant>
    <interactant intactId="EBI-927321">
        <id>Q9CQJ4</id>
        <label>Rnf2</label>
    </interactant>
    <organismsDiffer>false</organismsDiffer>
    <experiments>15</experiments>
</comment>
<comment type="subcellular location">
    <subcellularLocation>
        <location evidence="10">Nucleus</location>
    </subcellularLocation>
</comment>
<comment type="tissue specificity">
    <text evidence="9 10">Expressed in embryonic stem cells (PubMed:22226355). Expressed in a variety of tumor cells and in neural tissues (PubMed:2246278).</text>
</comment>
<comment type="developmental stage">
    <text evidence="10">Developmentally regulated.</text>
</comment>
<comment type="PTM">
    <text evidence="6">Phosphorylated. Homodimer formation is regulated by phosphorylation with only unphosphorylated proteins forming homodimers.</text>
</comment>
<comment type="disease">
    <text>Probably related to tumorigenesis since it is expressed strongly in most tumor cell lines.</text>
</comment>
<keyword id="KW-0238">DNA-binding</keyword>
<keyword id="KW-1017">Isopeptide bond</keyword>
<keyword id="KW-0479">Metal-binding</keyword>
<keyword id="KW-0539">Nucleus</keyword>
<keyword id="KW-0597">Phosphoprotein</keyword>
<keyword id="KW-1185">Reference proteome</keyword>
<keyword id="KW-0678">Repressor</keyword>
<keyword id="KW-0804">Transcription</keyword>
<keyword id="KW-0805">Transcription regulation</keyword>
<keyword id="KW-0832">Ubl conjugation</keyword>
<keyword id="KW-0862">Zinc</keyword>
<keyword id="KW-0863">Zinc-finger</keyword>
<feature type="chain" id="PRO_0000055985" description="Polycomb group RING finger protein 2">
    <location>
        <begin position="1"/>
        <end position="342"/>
    </location>
</feature>
<feature type="zinc finger region" description="RING-type" evidence="3">
    <location>
        <begin position="18"/>
        <end position="57"/>
    </location>
</feature>
<feature type="region of interest" description="Disordered" evidence="4">
    <location>
        <begin position="237"/>
        <end position="342"/>
    </location>
</feature>
<feature type="short sequence motif" description="Nuclear localization signal" evidence="2">
    <location>
        <begin position="81"/>
        <end position="95"/>
    </location>
</feature>
<feature type="compositionally biased region" description="Polar residues" evidence="4">
    <location>
        <begin position="243"/>
        <end position="253"/>
    </location>
</feature>
<feature type="compositionally biased region" description="Low complexity" evidence="4">
    <location>
        <begin position="263"/>
        <end position="318"/>
    </location>
</feature>
<feature type="compositionally biased region" description="Polar residues" evidence="4">
    <location>
        <begin position="319"/>
        <end position="328"/>
    </location>
</feature>
<feature type="modified residue" description="Phosphothreonine; by PKA" evidence="2">
    <location>
        <position position="237"/>
    </location>
</feature>
<feature type="modified residue" description="Phosphothreonine; by PKA" evidence="2">
    <location>
        <position position="334"/>
    </location>
</feature>
<feature type="cross-link" description="Glycyl lysine isopeptide (Lys-Gly) (interchain with G-Cter in SUMO2)" evidence="1">
    <location>
        <position position="51"/>
    </location>
</feature>
<feature type="cross-link" description="Glycyl lysine isopeptide (Lys-Gly) (interchain with G-Cter in SUMO2)" evidence="1">
    <location>
        <position position="88"/>
    </location>
</feature>
<proteinExistence type="evidence at protein level"/>
<organism>
    <name type="scientific">Mus musculus</name>
    <name type="common">Mouse</name>
    <dbReference type="NCBI Taxonomy" id="10090"/>
    <lineage>
        <taxon>Eukaryota</taxon>
        <taxon>Metazoa</taxon>
        <taxon>Chordata</taxon>
        <taxon>Craniata</taxon>
        <taxon>Vertebrata</taxon>
        <taxon>Euteleostomi</taxon>
        <taxon>Mammalia</taxon>
        <taxon>Eutheria</taxon>
        <taxon>Euarchontoglires</taxon>
        <taxon>Glires</taxon>
        <taxon>Rodentia</taxon>
        <taxon>Myomorpha</taxon>
        <taxon>Muroidea</taxon>
        <taxon>Muridae</taxon>
        <taxon>Murinae</taxon>
        <taxon>Mus</taxon>
        <taxon>Mus</taxon>
    </lineage>
</organism>
<reference key="1">
    <citation type="journal article" date="1990" name="J. Biol. Chem.">
        <title>Expression of novel DNA-binding protein with zinc finger structure in various tumor cells.</title>
        <authorList>
            <person name="Tagawa M."/>
            <person name="Sakamoto T."/>
            <person name="Shigemoto K."/>
            <person name="Matsubara H."/>
            <person name="Tamura Y."/>
            <person name="Ito T."/>
            <person name="Nakamura I."/>
            <person name="Okitsu A."/>
            <person name="Imai K."/>
            <person name="Taniguchi M."/>
        </authorList>
    </citation>
    <scope>NUCLEOTIDE SEQUENCE [MRNA]</scope>
    <scope>TISSUE SPECIFICITY</scope>
    <scope>DEVELOPMENTAL STAGE</scope>
    <scope>SUBCELLULAR LOCATION</scope>
</reference>
<reference key="2">
    <citation type="journal article" date="2001" name="Mamm. Genome">
        <title>High-throughput sequence identification of gene coding variants within alcohol-related QTLs.</title>
        <authorList>
            <person name="Ehringer M.A."/>
            <person name="Thompson J."/>
            <person name="Conroy O."/>
            <person name="Xu Y."/>
            <person name="Yang F."/>
            <person name="Canniff J."/>
            <person name="Beeson M."/>
            <person name="Gordon L."/>
            <person name="Bennett B."/>
            <person name="Johnson T.E."/>
            <person name="Sikela J.M."/>
        </authorList>
    </citation>
    <scope>NUCLEOTIDE SEQUENCE [MRNA]</scope>
    <source>
        <strain>ILS</strain>
        <strain>ISS</strain>
    </source>
</reference>
<reference key="3">
    <citation type="journal article" date="2004" name="Genome Res.">
        <title>The status, quality, and expansion of the NIH full-length cDNA project: the Mammalian Gene Collection (MGC).</title>
        <authorList>
            <consortium name="The MGC Project Team"/>
        </authorList>
    </citation>
    <scope>NUCLEOTIDE SEQUENCE [LARGE SCALE MRNA]</scope>
</reference>
<reference key="4">
    <citation type="journal article" date="1995" name="EMBO J.">
        <title>mel-18, a Polycomb group-related mammalian gene, encodes a transcriptional negative regulator with tumor suppressive activity.</title>
        <authorList>
            <person name="Kanno M."/>
            <person name="Hasegawa M."/>
            <person name="Ishida A."/>
            <person name="Isono K."/>
            <person name="Taniguchi M."/>
        </authorList>
    </citation>
    <scope>FUNCTION</scope>
</reference>
<reference key="5">
    <citation type="journal article" date="1996" name="Development">
        <title>A role for mel-18, a Polycomb group-related vertebrate gene, during the anteroposterior specification of the axial skeleton.</title>
        <authorList>
            <person name="Akasaka T."/>
            <person name="Kanno M."/>
            <person name="Balling R."/>
            <person name="Mieza M.A."/>
            <person name="Taniguchi M."/>
            <person name="Koseki H."/>
        </authorList>
    </citation>
    <scope>FUNCTION</scope>
</reference>
<reference key="6">
    <citation type="journal article" date="2002" name="Immunol. Lett.">
        <title>Chemokine-mediated thymopoiesis is regulated by a mammalian Polycomb group gene, mel-18.</title>
        <authorList>
            <person name="Miyazaki K."/>
            <person name="Inoue H."/>
            <person name="Onai N."/>
            <person name="Ishihara H."/>
            <person name="Kanno M."/>
        </authorList>
    </citation>
    <scope>FUNCTION</scope>
</reference>
<reference key="7">
    <citation type="journal article" date="2003" name="Biochem. Biophys. Res. Commun.">
        <title>Dimerization of the Polycomb-group protein Mel-18 is regulated by PKC phosphorylation.</title>
        <authorList>
            <person name="Fujisaki S."/>
            <person name="Ninomiya Y."/>
            <person name="Ishihara H."/>
            <person name="Miyazaki M."/>
            <person name="Kanno R."/>
            <person name="Asahara T."/>
            <person name="Kanno M."/>
        </authorList>
    </citation>
    <scope>SUBUNIT</scope>
    <scope>PHOSPHORYLATION</scope>
</reference>
<reference key="8">
    <citation type="journal article" date="2004" name="Exp. Hematol.">
        <title>Polycomb group gene mel-18 modulates the self-renewal activity and cell cycle status of hematopoietic stem cells.</title>
        <authorList>
            <person name="Kajiume T."/>
            <person name="Ninomiya Y."/>
            <person name="Ishihara H."/>
            <person name="Kanno R."/>
            <person name="Kanno M."/>
        </authorList>
    </citation>
    <scope>FUNCTION</scope>
</reference>
<reference key="9">
    <citation type="journal article" date="2005" name="J. Immunol.">
        <title>Polycomb group gene mel-18 regulates early T progenitor expansion by maintaining the expression of Hes-1, a target of the Notch pathway.</title>
        <authorList>
            <person name="Miyazaki M."/>
            <person name="Kawamoto H."/>
            <person name="Kato Y."/>
            <person name="Itoi M."/>
            <person name="Miyazaki K."/>
            <person name="Masuda K."/>
            <person name="Tashiro S."/>
            <person name="Ishihara H."/>
            <person name="Igarashi K."/>
            <person name="Amagai T."/>
            <person name="Kanno R."/>
            <person name="Kanno M."/>
        </authorList>
    </citation>
    <scope>FUNCTION</scope>
</reference>
<reference key="10">
    <citation type="journal article" date="2005" name="Mol. Cell. Biol.">
        <title>Mammalian polyhomeotic homologues Phc2 and Phc1 act in synergy to mediate polycomb repression of Hox genes.</title>
        <authorList>
            <person name="Isono K."/>
            <person name="Fujimura Y."/>
            <person name="Shinga J."/>
            <person name="Yamaki M."/>
            <person name="O-Wang J."/>
            <person name="Takihara Y."/>
            <person name="Murahashi Y."/>
            <person name="Takada Y."/>
            <person name="Mizutani-Koseki Y."/>
            <person name="Koseki H."/>
        </authorList>
    </citation>
    <scope>INTERACTION WITH PHC2</scope>
</reference>
<reference key="11">
    <citation type="journal article" date="2012" name="Cell Stem Cell">
        <title>Nonoverlapping functions of the Polycomb group Cbx family of proteins in embryonic stem cells.</title>
        <authorList>
            <person name="Morey L."/>
            <person name="Pascual G."/>
            <person name="Cozzuto L."/>
            <person name="Roma G."/>
            <person name="Wutz A."/>
            <person name="Benitah S.A."/>
            <person name="Di Croce L."/>
        </authorList>
    </citation>
    <scope>INTERACTION WITH RNF2 AND CBX7</scope>
    <scope>TISSUE SPECIFICITY</scope>
</reference>
<gene>
    <name type="primary">Pcgf2</name>
    <name type="synonym">Mel-18</name>
    <name type="synonym">Mel18</name>
    <name type="synonym">Rnf110</name>
    <name type="synonym">Zfp144</name>
    <name type="synonym">Znf144</name>
</gene>
<dbReference type="EMBL" id="D90085">
    <property type="protein sequence ID" value="BAA14122.1"/>
    <property type="molecule type" value="mRNA"/>
</dbReference>
<dbReference type="EMBL" id="AF483502">
    <property type="protein sequence ID" value="AAL90776.1"/>
    <property type="molecule type" value="mRNA"/>
</dbReference>
<dbReference type="EMBL" id="AF483503">
    <property type="protein sequence ID" value="AAL90777.1"/>
    <property type="molecule type" value="mRNA"/>
</dbReference>
<dbReference type="EMBL" id="BC016419">
    <property type="protein sequence ID" value="AAH16419.1"/>
    <property type="molecule type" value="mRNA"/>
</dbReference>
<dbReference type="CCDS" id="CCDS25327.1"/>
<dbReference type="PIR" id="A37991">
    <property type="entry name" value="A37991"/>
</dbReference>
<dbReference type="RefSeq" id="NP_001156779.1">
    <property type="nucleotide sequence ID" value="NM_001163307.1"/>
</dbReference>
<dbReference type="RefSeq" id="NP_001156780.1">
    <property type="nucleotide sequence ID" value="NM_001163308.1"/>
</dbReference>
<dbReference type="RefSeq" id="NP_033571.1">
    <property type="nucleotide sequence ID" value="NM_009545.2"/>
</dbReference>
<dbReference type="RefSeq" id="XP_011247274.1">
    <property type="nucleotide sequence ID" value="XM_011248972.3"/>
</dbReference>
<dbReference type="RefSeq" id="XP_011247275.1">
    <property type="nucleotide sequence ID" value="XM_011248973.3"/>
</dbReference>
<dbReference type="RefSeq" id="XP_011247277.1">
    <property type="nucleotide sequence ID" value="XM_011248975.3"/>
</dbReference>
<dbReference type="RefSeq" id="XP_017169992.1">
    <property type="nucleotide sequence ID" value="XM_017314503.1"/>
</dbReference>
<dbReference type="RefSeq" id="XP_036012525.1">
    <property type="nucleotide sequence ID" value="XM_036156632.1"/>
</dbReference>
<dbReference type="RefSeq" id="XP_036012526.1">
    <property type="nucleotide sequence ID" value="XM_036156633.1"/>
</dbReference>
<dbReference type="SMR" id="P23798"/>
<dbReference type="BioGRID" id="204639">
    <property type="interactions" value="14"/>
</dbReference>
<dbReference type="CORUM" id="P23798"/>
<dbReference type="DIP" id="DIP-37645N"/>
<dbReference type="FunCoup" id="P23798">
    <property type="interactions" value="1021"/>
</dbReference>
<dbReference type="IntAct" id="P23798">
    <property type="interactions" value="14"/>
</dbReference>
<dbReference type="MINT" id="P23798"/>
<dbReference type="STRING" id="10090.ENSMUSP00000137517"/>
<dbReference type="GlyGen" id="P23798">
    <property type="glycosylation" value="3 sites"/>
</dbReference>
<dbReference type="iPTMnet" id="P23798"/>
<dbReference type="PhosphoSitePlus" id="P23798"/>
<dbReference type="PaxDb" id="10090-ENSMUSP00000018681"/>
<dbReference type="PeptideAtlas" id="P23798"/>
<dbReference type="ProteomicsDB" id="287966"/>
<dbReference type="Pumba" id="P23798"/>
<dbReference type="Antibodypedia" id="72907">
    <property type="antibodies" value="248 antibodies from 34 providers"/>
</dbReference>
<dbReference type="DNASU" id="22658"/>
<dbReference type="Ensembl" id="ENSMUST00000018681.14">
    <property type="protein sequence ID" value="ENSMUSP00000018681.8"/>
    <property type="gene ID" value="ENSMUSG00000018537.17"/>
</dbReference>
<dbReference type="Ensembl" id="ENSMUST00000103148.8">
    <property type="protein sequence ID" value="ENSMUSP00000099437.2"/>
    <property type="gene ID" value="ENSMUSG00000018537.17"/>
</dbReference>
<dbReference type="Ensembl" id="ENSMUST00000169807.8">
    <property type="protein sequence ID" value="ENSMUSP00000126967.2"/>
    <property type="gene ID" value="ENSMUSG00000018537.17"/>
</dbReference>
<dbReference type="Ensembl" id="ENSMUST00000179765.8">
    <property type="protein sequence ID" value="ENSMUSP00000137517.2"/>
    <property type="gene ID" value="ENSMUSG00000018537.17"/>
</dbReference>
<dbReference type="GeneID" id="22658"/>
<dbReference type="KEGG" id="mmu:22658"/>
<dbReference type="UCSC" id="uc007lel.2">
    <property type="organism name" value="mouse"/>
</dbReference>
<dbReference type="AGR" id="MGI:99161"/>
<dbReference type="CTD" id="7703"/>
<dbReference type="MGI" id="MGI:99161">
    <property type="gene designation" value="Pcgf2"/>
</dbReference>
<dbReference type="VEuPathDB" id="HostDB:ENSMUSG00000018537"/>
<dbReference type="eggNOG" id="KOG2660">
    <property type="taxonomic scope" value="Eukaryota"/>
</dbReference>
<dbReference type="GeneTree" id="ENSGT00940000159730"/>
<dbReference type="HOGENOM" id="CLU_046427_0_0_1"/>
<dbReference type="InParanoid" id="P23798"/>
<dbReference type="OMA" id="NGNTNCH"/>
<dbReference type="OrthoDB" id="1305878at2759"/>
<dbReference type="PhylomeDB" id="P23798"/>
<dbReference type="TreeFam" id="TF324206"/>
<dbReference type="Reactome" id="R-MMU-3108214">
    <property type="pathway name" value="SUMOylation of DNA damage response and repair proteins"/>
</dbReference>
<dbReference type="Reactome" id="R-MMU-3899300">
    <property type="pathway name" value="SUMOylation of transcription cofactors"/>
</dbReference>
<dbReference type="Reactome" id="R-MMU-4551638">
    <property type="pathway name" value="SUMOylation of chromatin organization proteins"/>
</dbReference>
<dbReference type="Reactome" id="R-MMU-4570464">
    <property type="pathway name" value="SUMOylation of RNA binding proteins"/>
</dbReference>
<dbReference type="Reactome" id="R-MMU-8953750">
    <property type="pathway name" value="Transcriptional Regulation by E2F6"/>
</dbReference>
<dbReference type="BioGRID-ORCS" id="22658">
    <property type="hits" value="2 hits in 84 CRISPR screens"/>
</dbReference>
<dbReference type="ChiTaRS" id="Pcgf2">
    <property type="organism name" value="mouse"/>
</dbReference>
<dbReference type="PRO" id="PR:P23798"/>
<dbReference type="Proteomes" id="UP000000589">
    <property type="component" value="Chromosome 11"/>
</dbReference>
<dbReference type="RNAct" id="P23798">
    <property type="molecule type" value="protein"/>
</dbReference>
<dbReference type="Bgee" id="ENSMUSG00000018537">
    <property type="expression patterns" value="Expressed in undifferentiated genital tubercle and 209 other cell types or tissues"/>
</dbReference>
<dbReference type="ExpressionAtlas" id="P23798">
    <property type="expression patterns" value="baseline and differential"/>
</dbReference>
<dbReference type="GO" id="GO:0016604">
    <property type="term" value="C:nuclear body"/>
    <property type="evidence" value="ECO:0000314"/>
    <property type="project" value="MGI"/>
</dbReference>
<dbReference type="GO" id="GO:0005654">
    <property type="term" value="C:nucleoplasm"/>
    <property type="evidence" value="ECO:0000304"/>
    <property type="project" value="Reactome"/>
</dbReference>
<dbReference type="GO" id="GO:0005634">
    <property type="term" value="C:nucleus"/>
    <property type="evidence" value="ECO:0000314"/>
    <property type="project" value="UniProtKB"/>
</dbReference>
<dbReference type="GO" id="GO:0031519">
    <property type="term" value="C:PcG protein complex"/>
    <property type="evidence" value="ECO:0000314"/>
    <property type="project" value="UniProtKB"/>
</dbReference>
<dbReference type="GO" id="GO:0035102">
    <property type="term" value="C:PRC1 complex"/>
    <property type="evidence" value="ECO:0000314"/>
    <property type="project" value="MGI"/>
</dbReference>
<dbReference type="GO" id="GO:0001739">
    <property type="term" value="C:sex chromatin"/>
    <property type="evidence" value="ECO:0000314"/>
    <property type="project" value="MGI"/>
</dbReference>
<dbReference type="GO" id="GO:0003682">
    <property type="term" value="F:chromatin binding"/>
    <property type="evidence" value="ECO:0000314"/>
    <property type="project" value="MGI"/>
</dbReference>
<dbReference type="GO" id="GO:0003677">
    <property type="term" value="F:DNA binding"/>
    <property type="evidence" value="ECO:0007669"/>
    <property type="project" value="UniProtKB-KW"/>
</dbReference>
<dbReference type="GO" id="GO:0008270">
    <property type="term" value="F:zinc ion binding"/>
    <property type="evidence" value="ECO:0007669"/>
    <property type="project" value="UniProtKB-KW"/>
</dbReference>
<dbReference type="GO" id="GO:0009952">
    <property type="term" value="P:anterior/posterior pattern specification"/>
    <property type="evidence" value="ECO:0000315"/>
    <property type="project" value="MGI"/>
</dbReference>
<dbReference type="GO" id="GO:0097190">
    <property type="term" value="P:apoptotic signaling pathway"/>
    <property type="evidence" value="ECO:0000316"/>
    <property type="project" value="MGI"/>
</dbReference>
<dbReference type="GO" id="GO:0070301">
    <property type="term" value="P:cellular response to hydrogen peroxide"/>
    <property type="evidence" value="ECO:0000314"/>
    <property type="project" value="MGI"/>
</dbReference>
<dbReference type="GO" id="GO:0006325">
    <property type="term" value="P:chromatin organization"/>
    <property type="evidence" value="ECO:0000316"/>
    <property type="project" value="MGI"/>
</dbReference>
<dbReference type="GO" id="GO:0006338">
    <property type="term" value="P:chromatin remodeling"/>
    <property type="evidence" value="ECO:0000250"/>
    <property type="project" value="UniProtKB"/>
</dbReference>
<dbReference type="GO" id="GO:0048706">
    <property type="term" value="P:embryonic skeletal system development"/>
    <property type="evidence" value="ECO:0000316"/>
    <property type="project" value="MGI"/>
</dbReference>
<dbReference type="GO" id="GO:0048704">
    <property type="term" value="P:embryonic skeletal system morphogenesis"/>
    <property type="evidence" value="ECO:0000316"/>
    <property type="project" value="MGI"/>
</dbReference>
<dbReference type="GO" id="GO:0001701">
    <property type="term" value="P:in utero embryonic development"/>
    <property type="evidence" value="ECO:0000316"/>
    <property type="project" value="MGI"/>
</dbReference>
<dbReference type="GO" id="GO:2001234">
    <property type="term" value="P:negative regulation of apoptotic signaling pathway"/>
    <property type="evidence" value="ECO:0000316"/>
    <property type="project" value="MGI"/>
</dbReference>
<dbReference type="GO" id="GO:0000122">
    <property type="term" value="P:negative regulation of transcription by RNA polymerase II"/>
    <property type="evidence" value="ECO:0000316"/>
    <property type="project" value="MGI"/>
</dbReference>
<dbReference type="CDD" id="cd17164">
    <property type="entry name" value="RAWUL_PCGF2"/>
    <property type="match status" value="1"/>
</dbReference>
<dbReference type="CDD" id="cd16736">
    <property type="entry name" value="RING-HC_PCGF4"/>
    <property type="match status" value="1"/>
</dbReference>
<dbReference type="FunFam" id="3.30.40.10:FF:000082">
    <property type="entry name" value="Polycomb group ring finger 2"/>
    <property type="match status" value="1"/>
</dbReference>
<dbReference type="FunFam" id="3.10.20.90:FF:000170">
    <property type="entry name" value="Polycomb group RING finger protein 2"/>
    <property type="match status" value="1"/>
</dbReference>
<dbReference type="Gene3D" id="3.10.20.90">
    <property type="entry name" value="Phosphatidylinositol 3-kinase Catalytic Subunit, Chain A, domain 1"/>
    <property type="match status" value="1"/>
</dbReference>
<dbReference type="Gene3D" id="3.30.40.10">
    <property type="entry name" value="Zinc/RING finger domain, C3HC4 (zinc finger)"/>
    <property type="match status" value="1"/>
</dbReference>
<dbReference type="InterPro" id="IPR032443">
    <property type="entry name" value="RAWUL"/>
</dbReference>
<dbReference type="InterPro" id="IPR001841">
    <property type="entry name" value="Znf_RING"/>
</dbReference>
<dbReference type="InterPro" id="IPR013083">
    <property type="entry name" value="Znf_RING/FYVE/PHD"/>
</dbReference>
<dbReference type="InterPro" id="IPR017907">
    <property type="entry name" value="Znf_RING_CS"/>
</dbReference>
<dbReference type="PANTHER" id="PTHR10825:SF31">
    <property type="entry name" value="POLYCOMB GROUP RING FINGER PROTEIN 2"/>
    <property type="match status" value="1"/>
</dbReference>
<dbReference type="PANTHER" id="PTHR10825">
    <property type="entry name" value="RING FINGER DOMAIN-CONTAINING, POLYCOMB GROUP COMPONENT"/>
    <property type="match status" value="1"/>
</dbReference>
<dbReference type="Pfam" id="PF16207">
    <property type="entry name" value="RAWUL"/>
    <property type="match status" value="1"/>
</dbReference>
<dbReference type="Pfam" id="PF13923">
    <property type="entry name" value="zf-C3HC4_2"/>
    <property type="match status" value="1"/>
</dbReference>
<dbReference type="SMART" id="SM00184">
    <property type="entry name" value="RING"/>
    <property type="match status" value="1"/>
</dbReference>
<dbReference type="SUPFAM" id="SSF57850">
    <property type="entry name" value="RING/U-box"/>
    <property type="match status" value="1"/>
</dbReference>
<dbReference type="PROSITE" id="PS00518">
    <property type="entry name" value="ZF_RING_1"/>
    <property type="match status" value="1"/>
</dbReference>
<dbReference type="PROSITE" id="PS50089">
    <property type="entry name" value="ZF_RING_2"/>
    <property type="match status" value="1"/>
</dbReference>
<name>PCGF2_MOUSE</name>
<evidence type="ECO:0000250" key="1">
    <source>
        <dbReference type="UniProtKB" id="P35227"/>
    </source>
</evidence>
<evidence type="ECO:0000255" key="2"/>
<evidence type="ECO:0000255" key="3">
    <source>
        <dbReference type="PROSITE-ProRule" id="PRU00175"/>
    </source>
</evidence>
<evidence type="ECO:0000256" key="4">
    <source>
        <dbReference type="SAM" id="MobiDB-lite"/>
    </source>
</evidence>
<evidence type="ECO:0000269" key="5">
    <source>
    </source>
</evidence>
<evidence type="ECO:0000269" key="6">
    <source>
    </source>
</evidence>
<evidence type="ECO:0000269" key="7">
    <source>
    </source>
</evidence>
<evidence type="ECO:0000269" key="8">
    <source>
    </source>
</evidence>
<evidence type="ECO:0000269" key="9">
    <source>
    </source>
</evidence>
<evidence type="ECO:0000269" key="10">
    <source>
    </source>
</evidence>
<evidence type="ECO:0000269" key="11">
    <source>
    </source>
</evidence>
<evidence type="ECO:0000269" key="12">
    <source>
    </source>
</evidence>
<evidence type="ECO:0000305" key="13"/>
<accession>P23798</accession>
<sequence length="342" mass="37723">MHRTTRIKITELNPHLMCALCGGYFIDATTIVECLHSFCKTCIVRYLETNKYCPMCDVQVHKTRPLLSIRSDKTLQDIVYKLVPGLFKDEMKRRRDFYAAYPLTEVPNGSNEDRGEVLEQEKGALGDDEIVSLSIEFYEGVRDREEKKNLTENGDGDKEKTGVRFLRCPAAMTVMHLAKFLRNKMDVPSKYKVEILYEDEPLKEYYTLMDIAYIYPWRRNGPLPLKYRVQPACKRLTLPTVPTPSEGTNTSGASECESVSDKAPSPATLPATSSSLPSPATPSHGSPSSHGPPATHPTSPTPPSTAAGTTTATNGGTSNCLQTPSSTSRGRKMTVNGAPCPP</sequence>